<sequence>MAKKSLIAREKKRKKLEEKFYLIRRYPTKEMSKGGSLSESWEIQGKLEALPRNSAPTRLHRRCFLTGRPRANVRDFGLSGHILREMVHICLLPGATRSSW</sequence>
<feature type="chain" id="PRO_0000130982" description="Small ribosomal subunit protein uS14c">
    <location>
        <begin position="1"/>
        <end position="100"/>
    </location>
</feature>
<gene>
    <name evidence="1" type="primary">rps14</name>
</gene>
<accession>P05638</accession>
<comment type="function">
    <text evidence="1">Binds 16S rRNA, required for the assembly of 30S particles.</text>
</comment>
<comment type="subunit">
    <text evidence="1">Part of the 30S ribosomal subunit.</text>
</comment>
<comment type="subcellular location">
    <subcellularLocation>
        <location>Plastid</location>
        <location>Chloroplast</location>
    </subcellularLocation>
</comment>
<comment type="similarity">
    <text evidence="1">Belongs to the universal ribosomal protein uS14 family.</text>
</comment>
<name>RR14_PEA</name>
<geneLocation type="chloroplast"/>
<keyword id="KW-0150">Chloroplast</keyword>
<keyword id="KW-0934">Plastid</keyword>
<keyword id="KW-0687">Ribonucleoprotein</keyword>
<keyword id="KW-0689">Ribosomal protein</keyword>
<keyword id="KW-0694">RNA-binding</keyword>
<keyword id="KW-0699">rRNA-binding</keyword>
<reference key="1">
    <citation type="journal article" date="1987" name="Nucleic Acids Res.">
        <title>Sequence of two regions of pea chloroplast DNA, one with the genes rps14, trnfM and trnG-GCC, and one with the genes trnP-UGG and trnW-CCA.</title>
        <authorList>
            <person name="Lehmbeck J."/>
            <person name="Stummann B.M."/>
            <person name="Henningsen K.W."/>
        </authorList>
    </citation>
    <scope>NUCLEOTIDE SEQUENCE [GENOMIC DNA]</scope>
</reference>
<dbReference type="EMBL" id="X05394">
    <property type="protein sequence ID" value="CAA28981.1"/>
    <property type="molecule type" value="Genomic_DNA"/>
</dbReference>
<dbReference type="PIR" id="A27523">
    <property type="entry name" value="A27523"/>
</dbReference>
<dbReference type="SMR" id="P05638"/>
<dbReference type="GO" id="GO:0009507">
    <property type="term" value="C:chloroplast"/>
    <property type="evidence" value="ECO:0007669"/>
    <property type="project" value="UniProtKB-SubCell"/>
</dbReference>
<dbReference type="GO" id="GO:0015935">
    <property type="term" value="C:small ribosomal subunit"/>
    <property type="evidence" value="ECO:0007669"/>
    <property type="project" value="TreeGrafter"/>
</dbReference>
<dbReference type="GO" id="GO:0019843">
    <property type="term" value="F:rRNA binding"/>
    <property type="evidence" value="ECO:0007669"/>
    <property type="project" value="UniProtKB-UniRule"/>
</dbReference>
<dbReference type="GO" id="GO:0003735">
    <property type="term" value="F:structural constituent of ribosome"/>
    <property type="evidence" value="ECO:0007669"/>
    <property type="project" value="InterPro"/>
</dbReference>
<dbReference type="GO" id="GO:0006412">
    <property type="term" value="P:translation"/>
    <property type="evidence" value="ECO:0007669"/>
    <property type="project" value="UniProtKB-UniRule"/>
</dbReference>
<dbReference type="FunFam" id="1.10.287.1480:FF:000001">
    <property type="entry name" value="30S ribosomal protein S14"/>
    <property type="match status" value="1"/>
</dbReference>
<dbReference type="Gene3D" id="1.10.287.1480">
    <property type="match status" value="1"/>
</dbReference>
<dbReference type="HAMAP" id="MF_00537">
    <property type="entry name" value="Ribosomal_uS14_1"/>
    <property type="match status" value="1"/>
</dbReference>
<dbReference type="InterPro" id="IPR001209">
    <property type="entry name" value="Ribosomal_uS14"/>
</dbReference>
<dbReference type="InterPro" id="IPR023036">
    <property type="entry name" value="Ribosomal_uS14_bac/plastid"/>
</dbReference>
<dbReference type="InterPro" id="IPR018271">
    <property type="entry name" value="Ribosomal_uS14_CS"/>
</dbReference>
<dbReference type="NCBIfam" id="NF006477">
    <property type="entry name" value="PRK08881.1"/>
    <property type="match status" value="1"/>
</dbReference>
<dbReference type="PANTHER" id="PTHR19836">
    <property type="entry name" value="30S RIBOSOMAL PROTEIN S14"/>
    <property type="match status" value="1"/>
</dbReference>
<dbReference type="PANTHER" id="PTHR19836:SF19">
    <property type="entry name" value="SMALL RIBOSOMAL SUBUNIT PROTEIN US14M"/>
    <property type="match status" value="1"/>
</dbReference>
<dbReference type="Pfam" id="PF00253">
    <property type="entry name" value="Ribosomal_S14"/>
    <property type="match status" value="1"/>
</dbReference>
<dbReference type="SUPFAM" id="SSF57716">
    <property type="entry name" value="Glucocorticoid receptor-like (DNA-binding domain)"/>
    <property type="match status" value="1"/>
</dbReference>
<dbReference type="PROSITE" id="PS00527">
    <property type="entry name" value="RIBOSOMAL_S14"/>
    <property type="match status" value="1"/>
</dbReference>
<evidence type="ECO:0000255" key="1">
    <source>
        <dbReference type="HAMAP-Rule" id="MF_00537"/>
    </source>
</evidence>
<evidence type="ECO:0000305" key="2"/>
<organism>
    <name type="scientific">Pisum sativum</name>
    <name type="common">Garden pea</name>
    <name type="synonym">Lathyrus oleraceus</name>
    <dbReference type="NCBI Taxonomy" id="3888"/>
    <lineage>
        <taxon>Eukaryota</taxon>
        <taxon>Viridiplantae</taxon>
        <taxon>Streptophyta</taxon>
        <taxon>Embryophyta</taxon>
        <taxon>Tracheophyta</taxon>
        <taxon>Spermatophyta</taxon>
        <taxon>Magnoliopsida</taxon>
        <taxon>eudicotyledons</taxon>
        <taxon>Gunneridae</taxon>
        <taxon>Pentapetalae</taxon>
        <taxon>rosids</taxon>
        <taxon>fabids</taxon>
        <taxon>Fabales</taxon>
        <taxon>Fabaceae</taxon>
        <taxon>Papilionoideae</taxon>
        <taxon>50 kb inversion clade</taxon>
        <taxon>NPAAA clade</taxon>
        <taxon>Hologalegina</taxon>
        <taxon>IRL clade</taxon>
        <taxon>Fabeae</taxon>
        <taxon>Pisum</taxon>
    </lineage>
</organism>
<protein>
    <recommendedName>
        <fullName evidence="1">Small ribosomal subunit protein uS14c</fullName>
    </recommendedName>
    <alternativeName>
        <fullName evidence="2">30S ribosomal protein S14, chloroplastic</fullName>
    </alternativeName>
</protein>
<proteinExistence type="inferred from homology"/>